<feature type="chain" id="PRO_1000191695" description="Na(+)-translocating NADH-quinone reductase subunit E">
    <location>
        <begin position="1"/>
        <end position="198"/>
    </location>
</feature>
<feature type="transmembrane region" description="Helical" evidence="1">
    <location>
        <begin position="11"/>
        <end position="31"/>
    </location>
</feature>
<feature type="transmembrane region" description="Helical" evidence="1">
    <location>
        <begin position="35"/>
        <end position="55"/>
    </location>
</feature>
<feature type="transmembrane region" description="Helical" evidence="1">
    <location>
        <begin position="77"/>
        <end position="97"/>
    </location>
</feature>
<feature type="transmembrane region" description="Helical" evidence="1">
    <location>
        <begin position="110"/>
        <end position="130"/>
    </location>
</feature>
<feature type="transmembrane region" description="Helical" evidence="1">
    <location>
        <begin position="140"/>
        <end position="160"/>
    </location>
</feature>
<feature type="transmembrane region" description="Helical" evidence="1">
    <location>
        <begin position="176"/>
        <end position="196"/>
    </location>
</feature>
<dbReference type="EC" id="7.2.1.1" evidence="1"/>
<dbReference type="EMBL" id="CP000687">
    <property type="protein sequence ID" value="ABY68759.1"/>
    <property type="molecule type" value="Genomic_DNA"/>
</dbReference>
<dbReference type="RefSeq" id="WP_005595869.1">
    <property type="nucleotide sequence ID" value="NC_010278.1"/>
</dbReference>
<dbReference type="SMR" id="B0BS59"/>
<dbReference type="GeneID" id="48598301"/>
<dbReference type="KEGG" id="apj:APJL_0155"/>
<dbReference type="HOGENOM" id="CLU_095255_0_0_6"/>
<dbReference type="Proteomes" id="UP000008547">
    <property type="component" value="Chromosome"/>
</dbReference>
<dbReference type="GO" id="GO:0009276">
    <property type="term" value="C:Gram-negative-bacterium-type cell wall"/>
    <property type="evidence" value="ECO:0007669"/>
    <property type="project" value="InterPro"/>
</dbReference>
<dbReference type="GO" id="GO:0005886">
    <property type="term" value="C:plasma membrane"/>
    <property type="evidence" value="ECO:0007669"/>
    <property type="project" value="UniProtKB-SubCell"/>
</dbReference>
<dbReference type="GO" id="GO:0016655">
    <property type="term" value="F:oxidoreductase activity, acting on NAD(P)H, quinone or similar compound as acceptor"/>
    <property type="evidence" value="ECO:0007669"/>
    <property type="project" value="UniProtKB-UniRule"/>
</dbReference>
<dbReference type="GO" id="GO:0022904">
    <property type="term" value="P:respiratory electron transport chain"/>
    <property type="evidence" value="ECO:0007669"/>
    <property type="project" value="InterPro"/>
</dbReference>
<dbReference type="GO" id="GO:0006814">
    <property type="term" value="P:sodium ion transport"/>
    <property type="evidence" value="ECO:0007669"/>
    <property type="project" value="UniProtKB-UniRule"/>
</dbReference>
<dbReference type="HAMAP" id="MF_00429">
    <property type="entry name" value="NqrE"/>
    <property type="match status" value="1"/>
</dbReference>
<dbReference type="InterPro" id="IPR003667">
    <property type="entry name" value="NqrDE/RnfAE"/>
</dbReference>
<dbReference type="InterPro" id="IPR050133">
    <property type="entry name" value="NqrDE/RnfAE_oxidrdctase"/>
</dbReference>
<dbReference type="InterPro" id="IPR010967">
    <property type="entry name" value="NqrE"/>
</dbReference>
<dbReference type="NCBIfam" id="TIGR01940">
    <property type="entry name" value="nqrE"/>
    <property type="match status" value="1"/>
</dbReference>
<dbReference type="PANTHER" id="PTHR30335">
    <property type="entry name" value="INTEGRAL MEMBRANE PROTEIN OF SOXR-REDUCING COMPLEX"/>
    <property type="match status" value="1"/>
</dbReference>
<dbReference type="PANTHER" id="PTHR30335:SF1">
    <property type="entry name" value="NA(+)-TRANSLOCATING NADH-QUINONE REDUCTASE SUBUNIT E"/>
    <property type="match status" value="1"/>
</dbReference>
<dbReference type="Pfam" id="PF02508">
    <property type="entry name" value="Rnf-Nqr"/>
    <property type="match status" value="1"/>
</dbReference>
<dbReference type="PIRSF" id="PIRSF006102">
    <property type="entry name" value="NQR_DE"/>
    <property type="match status" value="1"/>
</dbReference>
<reference key="1">
    <citation type="journal article" date="2008" name="PLoS ONE">
        <title>Genome biology of Actinobacillus pleuropneumoniae JL03, an isolate of serotype 3 prevalent in China.</title>
        <authorList>
            <person name="Xu Z."/>
            <person name="Zhou Y."/>
            <person name="Li L."/>
            <person name="Zhou R."/>
            <person name="Xiao S."/>
            <person name="Wan Y."/>
            <person name="Zhang S."/>
            <person name="Wang K."/>
            <person name="Li W."/>
            <person name="Li L."/>
            <person name="Jin H."/>
            <person name="Kang M."/>
            <person name="Dalai B."/>
            <person name="Li T."/>
            <person name="Liu L."/>
            <person name="Cheng Y."/>
            <person name="Zhang L."/>
            <person name="Xu T."/>
            <person name="Zheng H."/>
            <person name="Pu S."/>
            <person name="Wang B."/>
            <person name="Gu W."/>
            <person name="Zhang X.L."/>
            <person name="Zhu G.-F."/>
            <person name="Wang S."/>
            <person name="Zhao G.-P."/>
            <person name="Chen H."/>
        </authorList>
    </citation>
    <scope>NUCLEOTIDE SEQUENCE [LARGE SCALE GENOMIC DNA]</scope>
    <source>
        <strain>JL03</strain>
    </source>
</reference>
<accession>B0BS59</accession>
<sequence length="198" mass="21232">MEHYLSLFVKSVFIENMALSFFLGMCTFLAVSKKVSTAFGLGIAVIVVLGIAVPANQLVYTHVLKDGALVEGVDLSFLNFITFIGVIAALVQILEMILDKFFPALYSALGIFLPLITVNCAIFGGVSFMVQREYNFTESVVYGLGAGTGWMLAIVALAGLTEKMKYSDVPAGLRGLGITFITVGLMALGFMSFSGIQL</sequence>
<proteinExistence type="inferred from homology"/>
<name>NQRE_ACTPJ</name>
<organism>
    <name type="scientific">Actinobacillus pleuropneumoniae serotype 3 (strain JL03)</name>
    <dbReference type="NCBI Taxonomy" id="434271"/>
    <lineage>
        <taxon>Bacteria</taxon>
        <taxon>Pseudomonadati</taxon>
        <taxon>Pseudomonadota</taxon>
        <taxon>Gammaproteobacteria</taxon>
        <taxon>Pasteurellales</taxon>
        <taxon>Pasteurellaceae</taxon>
        <taxon>Actinobacillus</taxon>
    </lineage>
</organism>
<keyword id="KW-0997">Cell inner membrane</keyword>
<keyword id="KW-1003">Cell membrane</keyword>
<keyword id="KW-0406">Ion transport</keyword>
<keyword id="KW-0472">Membrane</keyword>
<keyword id="KW-0520">NAD</keyword>
<keyword id="KW-0915">Sodium</keyword>
<keyword id="KW-0739">Sodium transport</keyword>
<keyword id="KW-1278">Translocase</keyword>
<keyword id="KW-0812">Transmembrane</keyword>
<keyword id="KW-1133">Transmembrane helix</keyword>
<keyword id="KW-0813">Transport</keyword>
<keyword id="KW-0830">Ubiquinone</keyword>
<gene>
    <name evidence="1" type="primary">nqrE</name>
    <name type="ordered locus">APJL_0155</name>
</gene>
<comment type="function">
    <text evidence="1">NQR complex catalyzes the reduction of ubiquinone-1 to ubiquinol by two successive reactions, coupled with the transport of Na(+) ions from the cytoplasm to the periplasm. NqrA to NqrE are probably involved in the second step, the conversion of ubisemiquinone to ubiquinol.</text>
</comment>
<comment type="catalytic activity">
    <reaction evidence="1">
        <text>a ubiquinone + n Na(+)(in) + NADH + H(+) = a ubiquinol + n Na(+)(out) + NAD(+)</text>
        <dbReference type="Rhea" id="RHEA:47748"/>
        <dbReference type="Rhea" id="RHEA-COMP:9565"/>
        <dbReference type="Rhea" id="RHEA-COMP:9566"/>
        <dbReference type="ChEBI" id="CHEBI:15378"/>
        <dbReference type="ChEBI" id="CHEBI:16389"/>
        <dbReference type="ChEBI" id="CHEBI:17976"/>
        <dbReference type="ChEBI" id="CHEBI:29101"/>
        <dbReference type="ChEBI" id="CHEBI:57540"/>
        <dbReference type="ChEBI" id="CHEBI:57945"/>
        <dbReference type="EC" id="7.2.1.1"/>
    </reaction>
</comment>
<comment type="subunit">
    <text evidence="1">Composed of six subunits; NqrA, NqrB, NqrC, NqrD, NqrE and NqrF.</text>
</comment>
<comment type="subcellular location">
    <subcellularLocation>
        <location evidence="1">Cell inner membrane</location>
        <topology evidence="1">Multi-pass membrane protein</topology>
    </subcellularLocation>
</comment>
<comment type="similarity">
    <text evidence="1">Belongs to the NqrDE/RnfAE family.</text>
</comment>
<evidence type="ECO:0000255" key="1">
    <source>
        <dbReference type="HAMAP-Rule" id="MF_00429"/>
    </source>
</evidence>
<protein>
    <recommendedName>
        <fullName evidence="1">Na(+)-translocating NADH-quinone reductase subunit E</fullName>
        <shortName evidence="1">Na(+)-NQR subunit E</shortName>
        <shortName evidence="1">Na(+)-translocating NQR subunit E</shortName>
        <ecNumber evidence="1">7.2.1.1</ecNumber>
    </recommendedName>
    <alternativeName>
        <fullName evidence="1">NQR complex subunit E</fullName>
    </alternativeName>
    <alternativeName>
        <fullName evidence="1">NQR-1 subunit E</fullName>
    </alternativeName>
</protein>